<sequence length="564" mass="62789">MATAERRALGIGFQWLSLATLVLICAGQGGRREDGGPACYGGFDLYFILDKSGSVLHHWNEIYYFVEQLAHKFISPQLRMSFIVFSTRGTTLMKLTEDREQIRQGLEELQKVLPGGDTYMHEGFERASEQIYYENRQGYRTASVIIALTDGELHEDLFFYSEREANRSRDLGAIVYCVGVKDFNETQLARIADSKDHVFPVNDGFQALQGIIHSILKKSCIEILAAEPSTICAGESFQVVVRGNGFRHARNVDRVLCSFKINDSVTLNEKPFSVEDTYLLCPAPILKEVGMKAALQVSMNDGLSFISSSVIITTTHCSDGSILAIALLILFLLLALALLWWFWPLCCTVIIKEVPPPPAEESEEEDDDGLPKKKWPTVDASYYGGRGVGGIKRMEVRWGEKGSTEEGAKLEKAKNARVKMPEQEYEFPEPRNLNNNMRRPSSPRKWYSPIKGKLDALWVLLRKGYDRVSVMRPQPGDTGRCINFTRVKNNQPAKYPLNNAYHTSSPPPAPIYTPPPPAPHCPPPPPSAPTPPIPSPPSTLPPPPQAPPPNRAPPPSRPPPRPSV</sequence>
<gene>
    <name evidence="19 21" type="primary">ANTXR1</name>
    <name evidence="16" type="synonym">ATR</name>
    <name evidence="15" type="synonym">TEM8</name>
</gene>
<accession>Q9H6X2</accession>
<accession>A8K7U8</accession>
<accession>J7K7G4</accession>
<accession>J7KF88</accession>
<accession>Q4ZFV6</accession>
<accession>Q53QD8</accession>
<accession>Q96P02</accession>
<accession>Q9NVP3</accession>
<comment type="function">
    <text evidence="7 8 13">Plays a role in cell attachment and migration. Interacts with extracellular matrix proteins and with the actin cytoskeleton and thereby plays an important role in normal extracellular matrix (ECM) homeostasis. Mediates adhesion of cells to type 1 collagen and gelatin, reorganization of the actin cytoskeleton and promotes cell spreading. Plays a role in the angiogenic response of cultured umbilical vein endothelial cells. May also act as a receptor for PLAU. Upon ligand binding, stimulates the phosphorylation of EGFR and ERK1/2 (PubMed:30241478).</text>
</comment>
<comment type="function">
    <text evidence="4 5 8 11">(Microbial infection) Acts as a receptor for protective antigen (PA) of B.anthracis.</text>
</comment>
<comment type="function">
    <text evidence="14">(Microbial infection) Mediates cell entry of Seneca Valley virus (SVV) when glycosylated.</text>
</comment>
<comment type="subunit">
    <text evidence="7 8">Interacts with gelatin and type 1 collagen. Interacts with the actin cytoskeleton.</text>
</comment>
<comment type="subunit">
    <text evidence="4 5 8 11">(Microbial infection) Interacts (via VWFA domain) with the protective antigen (PA) of B.anthracis (PubMed:11700562, PubMed:12700348, PubMed:16762926, PubMed:20585457). Binding does not occur in the presence of calcium (PubMed:11700562, PubMed:12700348, PubMed:16762926, PubMed:20585457).</text>
</comment>
<comment type="interaction">
    <interactant intactId="EBI-905643">
        <id>Q9H6X2</id>
    </interactant>
    <interactant intactId="EBI-910915">
        <id>O75581</id>
        <label>LRP6</label>
    </interactant>
    <organismsDiffer>false</organismsDiffer>
    <experiments>3</experiments>
</comment>
<comment type="interaction">
    <interactant intactId="EBI-905659">
        <id>Q9H6X2-2</id>
    </interactant>
    <interactant intactId="EBI-456868">
        <id>P13423</id>
        <label>pagA</label>
    </interactant>
    <organismsDiffer>true</organismsDiffer>
    <experiments>3</experiments>
</comment>
<comment type="subcellular location">
    <subcellularLocation>
        <location evidence="8 13">Cell membrane</location>
        <topology evidence="8">Single-pass type I membrane protein</topology>
    </subcellularLocation>
    <subcellularLocation>
        <location evidence="8">Cell projection</location>
        <location evidence="8">Lamellipodium membrane</location>
        <topology evidence="8">Single-pass type I membrane protein</topology>
    </subcellularLocation>
    <subcellularLocation>
        <location evidence="8">Cell projection</location>
        <location evidence="8">Filopodium membrane</location>
        <topology evidence="8">Single-pass type I membrane protein</topology>
    </subcellularLocation>
    <text evidence="8">At the membrane of lamellipodia and at the tip of actin-enriched filopodia (PubMed:16762926). Colocalizes with actin at the base of lamellipodia (PubMed:16762926).</text>
</comment>
<comment type="alternative products">
    <event type="alternative splicing"/>
    <isoform>
        <id>Q9H6X2-1</id>
        <name>1</name>
        <sequence type="displayed"/>
    </isoform>
    <isoform>
        <id>Q9H6X2-2</id>
        <name>2</name>
        <sequence type="described" ref="VSP_000444 VSP_000445"/>
    </isoform>
    <isoform>
        <id>Q9H6X2-3</id>
        <name>3</name>
        <sequence type="described" ref="VSP_000446 VSP_000447"/>
    </isoform>
    <isoform>
        <id>Q9H6X2-4</id>
        <name>4</name>
        <sequence type="described" ref="VSP_000448 VSP_000449"/>
    </isoform>
    <isoform>
        <id>Q9H6X2-5</id>
        <name>5</name>
        <name>V4</name>
        <sequence type="described" ref="VSP_047865"/>
    </isoform>
    <isoform>
        <id>Q9H6X2-6</id>
        <name>6</name>
        <name>V5</name>
        <sequence type="described" ref="VSP_047863 VSP_047864"/>
    </isoform>
    <text>Experimental confirmation may be lacking for some isoforms.</text>
</comment>
<comment type="tissue specificity">
    <text evidence="7">Detected in umbilical vein endothelial cells (at protein level). Highly expressed in tumor endothelial cells.</text>
</comment>
<comment type="induction">
    <text evidence="7">Up-regulated in cultured angiogenic umbilical vein endothelial cells.</text>
</comment>
<comment type="PTM">
    <text evidence="14">Glycosylated. Glycosylation is essential for Seneca Valley virus (SVV) attachment and entry.</text>
</comment>
<comment type="PTM">
    <text evidence="13">Phosphorylated upon PLAU binding.</text>
</comment>
<comment type="disease" evidence="9">
    <disease id="DI-02546">
        <name>Hemangioma, capillary infantile</name>
        <acronym>HCI</acronym>
        <description>A condition characterized by dull red, firm, dome-shaped hemangiomas, sharply demarcated from surrounding skin, usually presenting at birth or occurring within the first two or three months of life. They result from highly proliferative, localized growth of capillary endothelium and generally undergo regression and involution without scarring.</description>
        <dbReference type="MIM" id="602089"/>
    </disease>
    <text>Disease susceptibility is associated with variants affecting the gene represented in this entry.</text>
</comment>
<comment type="disease" evidence="12">
    <disease id="DI-03790">
        <name>GAPO syndrome</name>
        <acronym>GAPOS</acronym>
        <description>An autosomal recessive disease characterized by growth retardation, alopecia, failure of tooth eruption, and progressive optic atrophy in some patients.</description>
        <dbReference type="MIM" id="230740"/>
    </disease>
    <text>The disease is caused by variants affecting the gene represented in this entry.</text>
</comment>
<comment type="miscellaneous">
    <molecule>Isoform 1</molecule>
    <text>May be produced at very low levels due to a premature stop codon in the mRNA, leading to nonsense-mediated mRNA decay.</text>
</comment>
<comment type="miscellaneous">
    <molecule>Isoform 6</molecule>
    <text evidence="20">Prostate-specific.</text>
</comment>
<comment type="similarity">
    <text evidence="20">Belongs to the ATR family.</text>
</comment>
<comment type="sequence caution" evidence="20">
    <conflict type="miscellaneous discrepancy">
        <sequence resource="EMBL-CDS" id="BAA91707"/>
    </conflict>
    <text>Erroneous initiation (Translation N-terminally extended) due to a conflict with the genome, including a frameshift.</text>
</comment>
<comment type="sequence caution" evidence="20">
    <conflict type="erroneous initiation">
        <sequence resource="EMBL-CDS" id="BAB15128"/>
    </conflict>
    <text>Truncated N-terminus.</text>
</comment>
<proteinExistence type="evidence at protein level"/>
<evidence type="ECO:0000255" key="1"/>
<evidence type="ECO:0000255" key="2">
    <source>
        <dbReference type="PROSITE-ProRule" id="PRU00219"/>
    </source>
</evidence>
<evidence type="ECO:0000256" key="3">
    <source>
        <dbReference type="SAM" id="MobiDB-lite"/>
    </source>
</evidence>
<evidence type="ECO:0000269" key="4">
    <source>
    </source>
</evidence>
<evidence type="ECO:0000269" key="5">
    <source>
    </source>
</evidence>
<evidence type="ECO:0000269" key="6">
    <source>
    </source>
</evidence>
<evidence type="ECO:0000269" key="7">
    <source>
    </source>
</evidence>
<evidence type="ECO:0000269" key="8">
    <source>
    </source>
</evidence>
<evidence type="ECO:0000269" key="9">
    <source>
    </source>
</evidence>
<evidence type="ECO:0000269" key="10">
    <source>
    </source>
</evidence>
<evidence type="ECO:0000269" key="11">
    <source>
    </source>
</evidence>
<evidence type="ECO:0000269" key="12">
    <source>
    </source>
</evidence>
<evidence type="ECO:0000269" key="13">
    <source>
    </source>
</evidence>
<evidence type="ECO:0000269" key="14">
    <source>
    </source>
</evidence>
<evidence type="ECO:0000303" key="15">
    <source>
    </source>
</evidence>
<evidence type="ECO:0000303" key="16">
    <source>
    </source>
</evidence>
<evidence type="ECO:0000303" key="17">
    <source>
    </source>
</evidence>
<evidence type="ECO:0000303" key="18">
    <source>
    </source>
</evidence>
<evidence type="ECO:0000303" key="19">
    <source>
    </source>
</evidence>
<evidence type="ECO:0000305" key="20"/>
<evidence type="ECO:0000312" key="21">
    <source>
        <dbReference type="HGNC" id="HGNC:21014"/>
    </source>
</evidence>
<evidence type="ECO:0007744" key="22">
    <source>
        <dbReference type="PDB" id="3N2N"/>
    </source>
</evidence>
<evidence type="ECO:0007744" key="23">
    <source>
    </source>
</evidence>
<evidence type="ECO:0007829" key="24">
    <source>
        <dbReference type="PDB" id="3N2N"/>
    </source>
</evidence>
<keyword id="KW-0002">3D-structure</keyword>
<keyword id="KW-0025">Alternative splicing</keyword>
<keyword id="KW-1003">Cell membrane</keyword>
<keyword id="KW-0966">Cell projection</keyword>
<keyword id="KW-1015">Disulfide bond</keyword>
<keyword id="KW-0325">Glycoprotein</keyword>
<keyword id="KW-1063">Hypotrichosis</keyword>
<keyword id="KW-0472">Membrane</keyword>
<keyword id="KW-0479">Metal-binding</keyword>
<keyword id="KW-0597">Phosphoprotein</keyword>
<keyword id="KW-1267">Proteomics identification</keyword>
<keyword id="KW-0675">Receptor</keyword>
<keyword id="KW-1185">Reference proteome</keyword>
<keyword id="KW-0732">Signal</keyword>
<keyword id="KW-0812">Transmembrane</keyword>
<keyword id="KW-1133">Transmembrane helix</keyword>
<dbReference type="EMBL" id="AF279145">
    <property type="protein sequence ID" value="AAK52094.1"/>
    <property type="molecule type" value="mRNA"/>
</dbReference>
<dbReference type="EMBL" id="AF421380">
    <property type="protein sequence ID" value="AAL26496.1"/>
    <property type="molecule type" value="mRNA"/>
</dbReference>
<dbReference type="EMBL" id="JX424838">
    <property type="protein sequence ID" value="AFQ94038.1"/>
    <property type="molecule type" value="mRNA"/>
</dbReference>
<dbReference type="EMBL" id="JX424839">
    <property type="protein sequence ID" value="AFQ94039.1"/>
    <property type="molecule type" value="mRNA"/>
</dbReference>
<dbReference type="EMBL" id="AK001463">
    <property type="protein sequence ID" value="BAA91707.1"/>
    <property type="status" value="ALT_SEQ"/>
    <property type="molecule type" value="mRNA"/>
</dbReference>
<dbReference type="EMBL" id="AK025429">
    <property type="protein sequence ID" value="BAB15128.1"/>
    <property type="status" value="ALT_INIT"/>
    <property type="molecule type" value="mRNA"/>
</dbReference>
<dbReference type="EMBL" id="AK292113">
    <property type="protein sequence ID" value="BAF84802.1"/>
    <property type="molecule type" value="mRNA"/>
</dbReference>
<dbReference type="EMBL" id="AC112230">
    <property type="protein sequence ID" value="AAX88860.1"/>
    <property type="molecule type" value="Genomic_DNA"/>
</dbReference>
<dbReference type="EMBL" id="AC114802">
    <property type="protein sequence ID" value="AAY24067.1"/>
    <property type="molecule type" value="Genomic_DNA"/>
</dbReference>
<dbReference type="EMBL" id="BC012074">
    <property type="protein sequence ID" value="AAH12074.1"/>
    <property type="molecule type" value="mRNA"/>
</dbReference>
<dbReference type="CCDS" id="CCDS1892.1">
    <molecule id="Q9H6X2-1"/>
</dbReference>
<dbReference type="CCDS" id="CCDS46313.1">
    <molecule id="Q9H6X2-2"/>
</dbReference>
<dbReference type="CCDS" id="CCDS46314.1">
    <molecule id="Q9H6X2-4"/>
</dbReference>
<dbReference type="RefSeq" id="NP_060623.2">
    <molecule id="Q9H6X2-4"/>
    <property type="nucleotide sequence ID" value="NM_018153.3"/>
</dbReference>
<dbReference type="RefSeq" id="NP_115584.1">
    <molecule id="Q9H6X2-1"/>
    <property type="nucleotide sequence ID" value="NM_032208.3"/>
</dbReference>
<dbReference type="RefSeq" id="NP_444262.1">
    <molecule id="Q9H6X2-2"/>
    <property type="nucleotide sequence ID" value="NM_053034.2"/>
</dbReference>
<dbReference type="PDB" id="3N2N">
    <property type="method" value="X-ray"/>
    <property type="resolution" value="1.80 A"/>
    <property type="chains" value="A/B/C/D/E/F=38-220"/>
</dbReference>
<dbReference type="PDB" id="6ADL">
    <property type="method" value="EM"/>
    <property type="resolution" value="3.08 A"/>
    <property type="chains" value="R=38-220"/>
</dbReference>
<dbReference type="PDB" id="6ADM">
    <property type="method" value="EM"/>
    <property type="resolution" value="2.84 A"/>
    <property type="chains" value="R=38-220"/>
</dbReference>
<dbReference type="PDB" id="6ADR">
    <property type="method" value="EM"/>
    <property type="resolution" value="3.38 A"/>
    <property type="chains" value="R=38-220"/>
</dbReference>
<dbReference type="PDB" id="6CX1">
    <property type="method" value="EM"/>
    <property type="resolution" value="3.80 A"/>
    <property type="chains" value="E=39-220"/>
</dbReference>
<dbReference type="PDBsum" id="3N2N"/>
<dbReference type="PDBsum" id="6ADL"/>
<dbReference type="PDBsum" id="6ADM"/>
<dbReference type="PDBsum" id="6ADR"/>
<dbReference type="PDBsum" id="6CX1"/>
<dbReference type="EMDB" id="EMD-7772"/>
<dbReference type="EMDB" id="EMD-9607"/>
<dbReference type="EMDB" id="EMD-9608"/>
<dbReference type="EMDB" id="EMD-9611"/>
<dbReference type="SMR" id="Q9H6X2"/>
<dbReference type="BioGRID" id="123924">
    <property type="interactions" value="157"/>
</dbReference>
<dbReference type="FunCoup" id="Q9H6X2">
    <property type="interactions" value="879"/>
</dbReference>
<dbReference type="IntAct" id="Q9H6X2">
    <property type="interactions" value="82"/>
</dbReference>
<dbReference type="MINT" id="Q9H6X2"/>
<dbReference type="STRING" id="9606.ENSP00000301945"/>
<dbReference type="DrugBank" id="DB05945">
    <property type="generic name" value="MDX-1303"/>
</dbReference>
<dbReference type="GlyCosmos" id="Q9H6X2">
    <property type="glycosylation" value="3 sites, No reported glycans"/>
</dbReference>
<dbReference type="GlyGen" id="Q9H6X2">
    <property type="glycosylation" value="4 sites, 2 N-linked glycans (2 sites)"/>
</dbReference>
<dbReference type="iPTMnet" id="Q9H6X2"/>
<dbReference type="PhosphoSitePlus" id="Q9H6X2"/>
<dbReference type="SwissPalm" id="Q9H6X2"/>
<dbReference type="BioMuta" id="ANTXR1"/>
<dbReference type="DMDM" id="17366074"/>
<dbReference type="jPOST" id="Q9H6X2"/>
<dbReference type="MassIVE" id="Q9H6X2"/>
<dbReference type="PaxDb" id="9606-ENSP00000301945"/>
<dbReference type="PeptideAtlas" id="Q9H6X2"/>
<dbReference type="ProteomicsDB" id="81048">
    <molecule id="Q9H6X2-1"/>
</dbReference>
<dbReference type="ProteomicsDB" id="81049">
    <molecule id="Q9H6X2-2"/>
</dbReference>
<dbReference type="ProteomicsDB" id="81050">
    <molecule id="Q9H6X2-3"/>
</dbReference>
<dbReference type="ProteomicsDB" id="81051">
    <molecule id="Q9H6X2-4"/>
</dbReference>
<dbReference type="Pumba" id="Q9H6X2"/>
<dbReference type="Antibodypedia" id="16201">
    <property type="antibodies" value="636 antibodies from 37 providers"/>
</dbReference>
<dbReference type="DNASU" id="84168"/>
<dbReference type="Ensembl" id="ENST00000303714.9">
    <molecule id="Q9H6X2-1"/>
    <property type="protein sequence ID" value="ENSP00000301945.4"/>
    <property type="gene ID" value="ENSG00000169604.21"/>
</dbReference>
<dbReference type="Ensembl" id="ENST00000409349.7">
    <molecule id="Q9H6X2-2"/>
    <property type="protein sequence ID" value="ENSP00000386494.3"/>
    <property type="gene ID" value="ENSG00000169604.21"/>
</dbReference>
<dbReference type="Ensembl" id="ENST00000409829.7">
    <molecule id="Q9H6X2-4"/>
    <property type="protein sequence ID" value="ENSP00000387058.3"/>
    <property type="gene ID" value="ENSG00000169604.21"/>
</dbReference>
<dbReference type="Ensembl" id="ENST00000463335.2">
    <molecule id="Q9H6X2-3"/>
    <property type="protein sequence ID" value="ENSP00000506719.1"/>
    <property type="gene ID" value="ENSG00000169604.21"/>
</dbReference>
<dbReference type="GeneID" id="84168"/>
<dbReference type="KEGG" id="hsa:84168"/>
<dbReference type="MANE-Select" id="ENST00000303714.9">
    <property type="protein sequence ID" value="ENSP00000301945.4"/>
    <property type="RefSeq nucleotide sequence ID" value="NM_032208.3"/>
    <property type="RefSeq protein sequence ID" value="NP_115584.1"/>
</dbReference>
<dbReference type="UCSC" id="uc002sfe.4">
    <molecule id="Q9H6X2-1"/>
    <property type="organism name" value="human"/>
</dbReference>
<dbReference type="AGR" id="HGNC:21014"/>
<dbReference type="CTD" id="84168"/>
<dbReference type="DisGeNET" id="84168"/>
<dbReference type="GeneCards" id="ANTXR1"/>
<dbReference type="HGNC" id="HGNC:21014">
    <property type="gene designation" value="ANTXR1"/>
</dbReference>
<dbReference type="HPA" id="ENSG00000169604">
    <property type="expression patterns" value="Low tissue specificity"/>
</dbReference>
<dbReference type="MalaCards" id="ANTXR1"/>
<dbReference type="MIM" id="230740">
    <property type="type" value="phenotype"/>
</dbReference>
<dbReference type="MIM" id="602089">
    <property type="type" value="phenotype"/>
</dbReference>
<dbReference type="MIM" id="606410">
    <property type="type" value="gene"/>
</dbReference>
<dbReference type="neXtProt" id="NX_Q9H6X2"/>
<dbReference type="OpenTargets" id="ENSG00000169604"/>
<dbReference type="Orphanet" id="2067">
    <property type="disease" value="GAPO syndrome"/>
</dbReference>
<dbReference type="PharmGKB" id="PA134956382"/>
<dbReference type="VEuPathDB" id="HostDB:ENSG00000169604"/>
<dbReference type="eggNOG" id="ENOG502QSKR">
    <property type="taxonomic scope" value="Eukaryota"/>
</dbReference>
<dbReference type="GeneTree" id="ENSGT00940000156522"/>
<dbReference type="HOGENOM" id="CLU_029760_0_0_1"/>
<dbReference type="InParanoid" id="Q9H6X2"/>
<dbReference type="OMA" id="ANNMRRP"/>
<dbReference type="OrthoDB" id="10035766at2759"/>
<dbReference type="PAN-GO" id="Q9H6X2">
    <property type="GO annotations" value="4 GO annotations based on evolutionary models"/>
</dbReference>
<dbReference type="PhylomeDB" id="Q9H6X2"/>
<dbReference type="TreeFam" id="TF328943"/>
<dbReference type="PathwayCommons" id="Q9H6X2"/>
<dbReference type="Reactome" id="R-HSA-5210891">
    <property type="pathway name" value="Uptake and function of anthrax toxins"/>
</dbReference>
<dbReference type="SignaLink" id="Q9H6X2"/>
<dbReference type="BioGRID-ORCS" id="84168">
    <property type="hits" value="17 hits in 1154 CRISPR screens"/>
</dbReference>
<dbReference type="ChiTaRS" id="ANTXR1">
    <property type="organism name" value="human"/>
</dbReference>
<dbReference type="EvolutionaryTrace" id="Q9H6X2"/>
<dbReference type="GeneWiki" id="ANTXR1"/>
<dbReference type="GenomeRNAi" id="84168"/>
<dbReference type="Pharos" id="Q9H6X2">
    <property type="development level" value="Tbio"/>
</dbReference>
<dbReference type="PRO" id="PR:Q9H6X2"/>
<dbReference type="Proteomes" id="UP000005640">
    <property type="component" value="Chromosome 2"/>
</dbReference>
<dbReference type="RNAct" id="Q9H6X2">
    <property type="molecule type" value="protein"/>
</dbReference>
<dbReference type="Bgee" id="ENSG00000169604">
    <property type="expression patterns" value="Expressed in stromal cell of endometrium and 187 other cell types or tissues"/>
</dbReference>
<dbReference type="ExpressionAtlas" id="Q9H6X2">
    <property type="expression patterns" value="baseline and differential"/>
</dbReference>
<dbReference type="GO" id="GO:0009986">
    <property type="term" value="C:cell surface"/>
    <property type="evidence" value="ECO:0000314"/>
    <property type="project" value="MGI"/>
</dbReference>
<dbReference type="GO" id="GO:0010008">
    <property type="term" value="C:endosome membrane"/>
    <property type="evidence" value="ECO:0000304"/>
    <property type="project" value="Reactome"/>
</dbReference>
<dbReference type="GO" id="GO:0009897">
    <property type="term" value="C:external side of plasma membrane"/>
    <property type="evidence" value="ECO:0000314"/>
    <property type="project" value="MGI"/>
</dbReference>
<dbReference type="GO" id="GO:0031527">
    <property type="term" value="C:filopodium membrane"/>
    <property type="evidence" value="ECO:0000314"/>
    <property type="project" value="UniProtKB"/>
</dbReference>
<dbReference type="GO" id="GO:0031258">
    <property type="term" value="C:lamellipodium membrane"/>
    <property type="evidence" value="ECO:0000314"/>
    <property type="project" value="UniProtKB"/>
</dbReference>
<dbReference type="GO" id="GO:0005886">
    <property type="term" value="C:plasma membrane"/>
    <property type="evidence" value="ECO:0000318"/>
    <property type="project" value="GO_Central"/>
</dbReference>
<dbReference type="GO" id="GO:0051015">
    <property type="term" value="F:actin filament binding"/>
    <property type="evidence" value="ECO:0000314"/>
    <property type="project" value="UniProtKB"/>
</dbReference>
<dbReference type="GO" id="GO:0005518">
    <property type="term" value="F:collagen binding"/>
    <property type="evidence" value="ECO:0000314"/>
    <property type="project" value="UniProtKB"/>
</dbReference>
<dbReference type="GO" id="GO:0046872">
    <property type="term" value="F:metal ion binding"/>
    <property type="evidence" value="ECO:0007669"/>
    <property type="project" value="UniProtKB-KW"/>
</dbReference>
<dbReference type="GO" id="GO:0004888">
    <property type="term" value="F:transmembrane signaling receptor activity"/>
    <property type="evidence" value="ECO:0000314"/>
    <property type="project" value="UniProtKB"/>
</dbReference>
<dbReference type="GO" id="GO:0030036">
    <property type="term" value="P:actin cytoskeleton organization"/>
    <property type="evidence" value="ECO:0000314"/>
    <property type="project" value="UniProtKB"/>
</dbReference>
<dbReference type="GO" id="GO:0001568">
    <property type="term" value="P:blood vessel development"/>
    <property type="evidence" value="ECO:0007669"/>
    <property type="project" value="Ensembl"/>
</dbReference>
<dbReference type="GO" id="GO:1901202">
    <property type="term" value="P:negative regulation of extracellular matrix assembly"/>
    <property type="evidence" value="ECO:0007669"/>
    <property type="project" value="Ensembl"/>
</dbReference>
<dbReference type="GO" id="GO:0034446">
    <property type="term" value="P:substrate adhesion-dependent cell spreading"/>
    <property type="evidence" value="ECO:0000314"/>
    <property type="project" value="UniProtKB"/>
</dbReference>
<dbReference type="CDD" id="cd01474">
    <property type="entry name" value="vWA_ATR"/>
    <property type="match status" value="1"/>
</dbReference>
<dbReference type="FunFam" id="3.40.50.410:FF:000017">
    <property type="entry name" value="Anthrax toxin receptor 1"/>
    <property type="match status" value="1"/>
</dbReference>
<dbReference type="Gene3D" id="3.40.50.410">
    <property type="entry name" value="von Willebrand factor, type A domain"/>
    <property type="match status" value="1"/>
</dbReference>
<dbReference type="InterPro" id="IPR008399">
    <property type="entry name" value="Anthrax_toxin_rcpt_C"/>
</dbReference>
<dbReference type="InterPro" id="IPR008400">
    <property type="entry name" value="Anthrax_toxin_rcpt_extracel"/>
</dbReference>
<dbReference type="InterPro" id="IPR002035">
    <property type="entry name" value="VWF_A"/>
</dbReference>
<dbReference type="InterPro" id="IPR036465">
    <property type="entry name" value="vWFA_dom_sf"/>
</dbReference>
<dbReference type="PANTHER" id="PTHR16059">
    <property type="entry name" value="ANTHRAX TOXIN RECEPTOR"/>
    <property type="match status" value="1"/>
</dbReference>
<dbReference type="PANTHER" id="PTHR16059:SF11">
    <property type="entry name" value="ANTHRAX TOXIN RECEPTOR 1"/>
    <property type="match status" value="1"/>
</dbReference>
<dbReference type="Pfam" id="PF05586">
    <property type="entry name" value="Ant_C"/>
    <property type="match status" value="1"/>
</dbReference>
<dbReference type="Pfam" id="PF05587">
    <property type="entry name" value="Anth_Ig"/>
    <property type="match status" value="1"/>
</dbReference>
<dbReference type="Pfam" id="PF00092">
    <property type="entry name" value="VWA"/>
    <property type="match status" value="1"/>
</dbReference>
<dbReference type="PRINTS" id="PR01217">
    <property type="entry name" value="PRICHEXTENSN"/>
</dbReference>
<dbReference type="SMART" id="SM00327">
    <property type="entry name" value="VWA"/>
    <property type="match status" value="1"/>
</dbReference>
<dbReference type="SUPFAM" id="SSF53300">
    <property type="entry name" value="vWA-like"/>
    <property type="match status" value="1"/>
</dbReference>
<dbReference type="PROSITE" id="PS50234">
    <property type="entry name" value="VWFA"/>
    <property type="match status" value="1"/>
</dbReference>
<reference key="1">
    <citation type="journal article" date="2000" name="Science">
        <title>Genes expressed in human tumor endothelium.</title>
        <authorList>
            <person name="St Croix B."/>
            <person name="Rago C."/>
            <person name="Velculescu V.E."/>
            <person name="Traverso G."/>
            <person name="Romans K.E."/>
            <person name="Montgomery E."/>
            <person name="Lal A."/>
            <person name="Riggins G.J."/>
            <person name="Lengauer C."/>
            <person name="Vogelstein B."/>
            <person name="Kinzler K.W."/>
        </authorList>
    </citation>
    <scope>NUCLEOTIDE SEQUENCE [MRNA] (ISOFORM 1)</scope>
</reference>
<reference key="2">
    <citation type="journal article" date="2001" name="Nature">
        <title>Identification of the cellular receptor for anthrax toxin.</title>
        <authorList>
            <person name="Bradley K.A."/>
            <person name="Mogridge J."/>
            <person name="Mourez M."/>
            <person name="Collier R.J."/>
            <person name="Young J.A.T."/>
        </authorList>
    </citation>
    <scope>NUCLEOTIDE SEQUENCE [MRNA] (ISOFORM 2)</scope>
    <scope>FUNCTION (MICROBIAL INFECTION)</scope>
    <scope>INTERACTION WITH ANTHRAX TOXIN PA (MICROBIAL INFECTION)</scope>
</reference>
<reference key="3">
    <citation type="journal article" date="2012" name="PLoS ONE">
        <title>Broad expression analysis of human ANTXR1/TEM8 transcripts reveals differential expression and novel splizce variants.</title>
        <authorList>
            <person name="Vargas M."/>
            <person name="Karamsetty R."/>
            <person name="Leppla S.H."/>
            <person name="Chaudry G.J."/>
        </authorList>
    </citation>
    <scope>NUCLEOTIDE SEQUENCE [MRNA] (ISOFORMS 5 AND 6)</scope>
    <scope>ALTERNATIVE SPLICING</scope>
    <source>
        <tissue>Brain</tissue>
        <tissue>Prostate</tissue>
    </source>
</reference>
<reference key="4">
    <citation type="journal article" date="2004" name="Nat. Genet.">
        <title>Complete sequencing and characterization of 21,243 full-length human cDNAs.</title>
        <authorList>
            <person name="Ota T."/>
            <person name="Suzuki Y."/>
            <person name="Nishikawa T."/>
            <person name="Otsuki T."/>
            <person name="Sugiyama T."/>
            <person name="Irie R."/>
            <person name="Wakamatsu A."/>
            <person name="Hayashi K."/>
            <person name="Sato H."/>
            <person name="Nagai K."/>
            <person name="Kimura K."/>
            <person name="Makita H."/>
            <person name="Sekine M."/>
            <person name="Obayashi M."/>
            <person name="Nishi T."/>
            <person name="Shibahara T."/>
            <person name="Tanaka T."/>
            <person name="Ishii S."/>
            <person name="Yamamoto J."/>
            <person name="Saito K."/>
            <person name="Kawai Y."/>
            <person name="Isono Y."/>
            <person name="Nakamura Y."/>
            <person name="Nagahari K."/>
            <person name="Murakami K."/>
            <person name="Yasuda T."/>
            <person name="Iwayanagi T."/>
            <person name="Wagatsuma M."/>
            <person name="Shiratori A."/>
            <person name="Sudo H."/>
            <person name="Hosoiri T."/>
            <person name="Kaku Y."/>
            <person name="Kodaira H."/>
            <person name="Kondo H."/>
            <person name="Sugawara M."/>
            <person name="Takahashi M."/>
            <person name="Kanda K."/>
            <person name="Yokoi T."/>
            <person name="Furuya T."/>
            <person name="Kikkawa E."/>
            <person name="Omura Y."/>
            <person name="Abe K."/>
            <person name="Kamihara K."/>
            <person name="Katsuta N."/>
            <person name="Sato K."/>
            <person name="Tanikawa M."/>
            <person name="Yamazaki M."/>
            <person name="Ninomiya K."/>
            <person name="Ishibashi T."/>
            <person name="Yamashita H."/>
            <person name="Murakawa K."/>
            <person name="Fujimori K."/>
            <person name="Tanai H."/>
            <person name="Kimata M."/>
            <person name="Watanabe M."/>
            <person name="Hiraoka S."/>
            <person name="Chiba Y."/>
            <person name="Ishida S."/>
            <person name="Ono Y."/>
            <person name="Takiguchi S."/>
            <person name="Watanabe S."/>
            <person name="Yosida M."/>
            <person name="Hotuta T."/>
            <person name="Kusano J."/>
            <person name="Kanehori K."/>
            <person name="Takahashi-Fujii A."/>
            <person name="Hara H."/>
            <person name="Tanase T.-O."/>
            <person name="Nomura Y."/>
            <person name="Togiya S."/>
            <person name="Komai F."/>
            <person name="Hara R."/>
            <person name="Takeuchi K."/>
            <person name="Arita M."/>
            <person name="Imose N."/>
            <person name="Musashino K."/>
            <person name="Yuuki H."/>
            <person name="Oshima A."/>
            <person name="Sasaki N."/>
            <person name="Aotsuka S."/>
            <person name="Yoshikawa Y."/>
            <person name="Matsunawa H."/>
            <person name="Ichihara T."/>
            <person name="Shiohata N."/>
            <person name="Sano S."/>
            <person name="Moriya S."/>
            <person name="Momiyama H."/>
            <person name="Satoh N."/>
            <person name="Takami S."/>
            <person name="Terashima Y."/>
            <person name="Suzuki O."/>
            <person name="Nakagawa S."/>
            <person name="Senoh A."/>
            <person name="Mizoguchi H."/>
            <person name="Goto Y."/>
            <person name="Shimizu F."/>
            <person name="Wakebe H."/>
            <person name="Hishigaki H."/>
            <person name="Watanabe T."/>
            <person name="Sugiyama A."/>
            <person name="Takemoto M."/>
            <person name="Kawakami B."/>
            <person name="Yamazaki M."/>
            <person name="Watanabe K."/>
            <person name="Kumagai A."/>
            <person name="Itakura S."/>
            <person name="Fukuzumi Y."/>
            <person name="Fujimori Y."/>
            <person name="Komiyama M."/>
            <person name="Tashiro H."/>
            <person name="Tanigami A."/>
            <person name="Fujiwara T."/>
            <person name="Ono T."/>
            <person name="Yamada K."/>
            <person name="Fujii Y."/>
            <person name="Ozaki K."/>
            <person name="Hirao M."/>
            <person name="Ohmori Y."/>
            <person name="Kawabata A."/>
            <person name="Hikiji T."/>
            <person name="Kobatake N."/>
            <person name="Inagaki H."/>
            <person name="Ikema Y."/>
            <person name="Okamoto S."/>
            <person name="Okitani R."/>
            <person name="Kawakami T."/>
            <person name="Noguchi S."/>
            <person name="Itoh T."/>
            <person name="Shigeta K."/>
            <person name="Senba T."/>
            <person name="Matsumura K."/>
            <person name="Nakajima Y."/>
            <person name="Mizuno T."/>
            <person name="Morinaga M."/>
            <person name="Sasaki M."/>
            <person name="Togashi T."/>
            <person name="Oyama M."/>
            <person name="Hata H."/>
            <person name="Watanabe M."/>
            <person name="Komatsu T."/>
            <person name="Mizushima-Sugano J."/>
            <person name="Satoh T."/>
            <person name="Shirai Y."/>
            <person name="Takahashi Y."/>
            <person name="Nakagawa K."/>
            <person name="Okumura K."/>
            <person name="Nagase T."/>
            <person name="Nomura N."/>
            <person name="Kikuchi H."/>
            <person name="Masuho Y."/>
            <person name="Yamashita R."/>
            <person name="Nakai K."/>
            <person name="Yada T."/>
            <person name="Nakamura Y."/>
            <person name="Ohara O."/>
            <person name="Isogai T."/>
            <person name="Sugano S."/>
        </authorList>
    </citation>
    <scope>NUCLEOTIDE SEQUENCE [LARGE SCALE MRNA] OF 184-564 (ISOFORM 1)</scope>
    <scope>NUCLEOTIDE SEQUENCE [LARGE SCALE MRNA] (ISOFORMS 3 AND 4)</scope>
    <scope>VARIANT LYS-7</scope>
</reference>
<reference key="5">
    <citation type="journal article" date="2005" name="Nature">
        <title>Generation and annotation of the DNA sequences of human chromosomes 2 and 4.</title>
        <authorList>
            <person name="Hillier L.W."/>
            <person name="Graves T.A."/>
            <person name="Fulton R.S."/>
            <person name="Fulton L.A."/>
            <person name="Pepin K.H."/>
            <person name="Minx P."/>
            <person name="Wagner-McPherson C."/>
            <person name="Layman D."/>
            <person name="Wylie K."/>
            <person name="Sekhon M."/>
            <person name="Becker M.C."/>
            <person name="Fewell G.A."/>
            <person name="Delehaunty K.D."/>
            <person name="Miner T.L."/>
            <person name="Nash W.E."/>
            <person name="Kremitzki C."/>
            <person name="Oddy L."/>
            <person name="Du H."/>
            <person name="Sun H."/>
            <person name="Bradshaw-Cordum H."/>
            <person name="Ali J."/>
            <person name="Carter J."/>
            <person name="Cordes M."/>
            <person name="Harris A."/>
            <person name="Isak A."/>
            <person name="van Brunt A."/>
            <person name="Nguyen C."/>
            <person name="Du F."/>
            <person name="Courtney L."/>
            <person name="Kalicki J."/>
            <person name="Ozersky P."/>
            <person name="Abbott S."/>
            <person name="Armstrong J."/>
            <person name="Belter E.A."/>
            <person name="Caruso L."/>
            <person name="Cedroni M."/>
            <person name="Cotton M."/>
            <person name="Davidson T."/>
            <person name="Desai A."/>
            <person name="Elliott G."/>
            <person name="Erb T."/>
            <person name="Fronick C."/>
            <person name="Gaige T."/>
            <person name="Haakenson W."/>
            <person name="Haglund K."/>
            <person name="Holmes A."/>
            <person name="Harkins R."/>
            <person name="Kim K."/>
            <person name="Kruchowski S.S."/>
            <person name="Strong C.M."/>
            <person name="Grewal N."/>
            <person name="Goyea E."/>
            <person name="Hou S."/>
            <person name="Levy A."/>
            <person name="Martinka S."/>
            <person name="Mead K."/>
            <person name="McLellan M.D."/>
            <person name="Meyer R."/>
            <person name="Randall-Maher J."/>
            <person name="Tomlinson C."/>
            <person name="Dauphin-Kohlberg S."/>
            <person name="Kozlowicz-Reilly A."/>
            <person name="Shah N."/>
            <person name="Swearengen-Shahid S."/>
            <person name="Snider J."/>
            <person name="Strong J.T."/>
            <person name="Thompson J."/>
            <person name="Yoakum M."/>
            <person name="Leonard S."/>
            <person name="Pearman C."/>
            <person name="Trani L."/>
            <person name="Radionenko M."/>
            <person name="Waligorski J.E."/>
            <person name="Wang C."/>
            <person name="Rock S.M."/>
            <person name="Tin-Wollam A.-M."/>
            <person name="Maupin R."/>
            <person name="Latreille P."/>
            <person name="Wendl M.C."/>
            <person name="Yang S.-P."/>
            <person name="Pohl C."/>
            <person name="Wallis J.W."/>
            <person name="Spieth J."/>
            <person name="Bieri T.A."/>
            <person name="Berkowicz N."/>
            <person name="Nelson J.O."/>
            <person name="Osborne J."/>
            <person name="Ding L."/>
            <person name="Meyer R."/>
            <person name="Sabo A."/>
            <person name="Shotland Y."/>
            <person name="Sinha P."/>
            <person name="Wohldmann P.E."/>
            <person name="Cook L.L."/>
            <person name="Hickenbotham M.T."/>
            <person name="Eldred J."/>
            <person name="Williams D."/>
            <person name="Jones T.A."/>
            <person name="She X."/>
            <person name="Ciccarelli F.D."/>
            <person name="Izaurralde E."/>
            <person name="Taylor J."/>
            <person name="Schmutz J."/>
            <person name="Myers R.M."/>
            <person name="Cox D.R."/>
            <person name="Huang X."/>
            <person name="McPherson J.D."/>
            <person name="Mardis E.R."/>
            <person name="Clifton S.W."/>
            <person name="Warren W.C."/>
            <person name="Chinwalla A.T."/>
            <person name="Eddy S.R."/>
            <person name="Marra M.A."/>
            <person name="Ovcharenko I."/>
            <person name="Furey T.S."/>
            <person name="Miller W."/>
            <person name="Eichler E.E."/>
            <person name="Bork P."/>
            <person name="Suyama M."/>
            <person name="Torrents D."/>
            <person name="Waterston R.H."/>
            <person name="Wilson R.K."/>
        </authorList>
    </citation>
    <scope>NUCLEOTIDE SEQUENCE [LARGE SCALE GENOMIC DNA]</scope>
</reference>
<reference key="6">
    <citation type="journal article" date="2004" name="Genome Res.">
        <title>The status, quality, and expansion of the NIH full-length cDNA project: the Mammalian Gene Collection (MGC).</title>
        <authorList>
            <consortium name="The MGC Project Team"/>
        </authorList>
    </citation>
    <scope>NUCLEOTIDE SEQUENCE [LARGE SCALE MRNA] (ISOFORM 4)</scope>
    <source>
        <tissue>Kidney</tissue>
    </source>
</reference>
<reference key="7">
    <citation type="journal article" date="2003" name="Proc. Natl. Acad. Sci. U.S.A.">
        <title>Human capillary morphogenesis protein 2 functions as an anthrax toxin receptor.</title>
        <authorList>
            <person name="Scobie H.M."/>
            <person name="Rainey G.J.A."/>
            <person name="Bradley K.A."/>
            <person name="Young J.A.T."/>
        </authorList>
    </citation>
    <scope>FUNCTION (MICROBIAL INFECTION)</scope>
    <scope>INTERACTION WITH ANTHRAX TOXIN PA (MICROBIAL INFECTION)</scope>
    <source>
        <tissue>Placenta</tissue>
    </source>
</reference>
<reference key="8">
    <citation type="journal article" date="2004" name="Genome Biol.">
        <title>An unappreciated role for RNA surveillance.</title>
        <authorList>
            <person name="Hillman R.T."/>
            <person name="Green R.E."/>
            <person name="Brenner S.E."/>
        </authorList>
    </citation>
    <scope>SPLICE ISOFORM(S) THAT ARE POTENTIAL NMD TARGET(S)</scope>
</reference>
<reference key="9">
    <citation type="journal article" date="2005" name="Exp. Cell Res.">
        <title>TEM8 expression stimulates endothelial cell adhesion and migration by regulating cell-matrix interactions on collagen.</title>
        <authorList>
            <person name="Hotchkiss K.A."/>
            <person name="Basile C.M."/>
            <person name="Spring S.C."/>
            <person name="Bonuccelli G."/>
            <person name="Lisanti M.P."/>
            <person name="Terman B.I."/>
        </authorList>
    </citation>
    <scope>FUNCTION</scope>
    <scope>INDUCTION</scope>
    <scope>INTERACTION WITH TYPE 1 COLLAGEN AND GELATIN</scope>
    <scope>TISSUE SPECIFICITY</scope>
</reference>
<reference key="10">
    <citation type="journal article" date="2006" name="Cell">
        <title>Global, in vivo, and site-specific phosphorylation dynamics in signaling networks.</title>
        <authorList>
            <person name="Olsen J.V."/>
            <person name="Blagoev B."/>
            <person name="Gnad F."/>
            <person name="Macek B."/>
            <person name="Kumar C."/>
            <person name="Mortensen P."/>
            <person name="Mann M."/>
        </authorList>
    </citation>
    <scope>PHOSPHORYLATION [LARGE SCALE ANALYSIS] AT SER-362</scope>
    <scope>IDENTIFICATION BY MASS SPECTROMETRY [LARGE SCALE ANALYSIS]</scope>
    <source>
        <tissue>Cervix carcinoma</tissue>
    </source>
</reference>
<reference key="11">
    <citation type="journal article" date="2006" name="J. Biol. Chem.">
        <title>Anthrax toxin receptor 1/tumor endothelium marker 8 mediates cell spreading by coupling extracellular ligands to the actin cytoskeleton.</title>
        <authorList>
            <person name="Werner E."/>
            <person name="Kowalczyk A.P."/>
            <person name="Faundez V."/>
        </authorList>
    </citation>
    <scope>FUNCTION</scope>
    <scope>SUBCELLULAR LOCATION</scope>
    <scope>INTERACTION WITH TYPE 1 COLLAGEN AND THE ACTIN CYTOSKELETON</scope>
    <scope>FUNCTION (MICROBIAL INFECTION)</scope>
    <scope>INTERACTION WITH ANTHRAX TOXIN PA (MICROBIAL INFECTION)</scope>
</reference>
<reference key="12">
    <citation type="journal article" date="2009" name="Nat. Biotechnol.">
        <title>Mass-spectrometric identification and relative quantification of N-linked cell surface glycoproteins.</title>
        <authorList>
            <person name="Wollscheid B."/>
            <person name="Bausch-Fluck D."/>
            <person name="Henderson C."/>
            <person name="O'Brien R."/>
            <person name="Bibel M."/>
            <person name="Schiess R."/>
            <person name="Aebersold R."/>
            <person name="Watts J.D."/>
        </authorList>
    </citation>
    <scope>GLYCOSYLATION [LARGE SCALE ANALYSIS] AT ASN-184</scope>
    <source>
        <tissue>Leukemic T-cell</tissue>
    </source>
</reference>
<reference key="13">
    <citation type="journal article" date="2013" name="Am. J. Hum. Genet.">
        <title>Mutations in ANTXR1 cause GAPO syndrome.</title>
        <authorList>
            <person name="Stranecky V."/>
            <person name="Hoischen A."/>
            <person name="Hartmannova H."/>
            <person name="Zaki M.S."/>
            <person name="Chaudhary A."/>
            <person name="Zudaire E."/>
            <person name="Noskova L."/>
            <person name="Baresova V."/>
            <person name="Pristoupilova A."/>
            <person name="Hodanova K."/>
            <person name="Sovova J."/>
            <person name="Hulkova H."/>
            <person name="Piherova L."/>
            <person name="Hehir-Kwa J.Y."/>
            <person name="de Silva D."/>
            <person name="Senanayake M.P."/>
            <person name="Farrag S."/>
            <person name="Zeman J."/>
            <person name="Martasek P."/>
            <person name="Baxova A."/>
            <person name="Afifi H.H."/>
            <person name="St Croix B."/>
            <person name="Brunner H.G."/>
            <person name="Temtamy S."/>
            <person name="Kmoch S."/>
        </authorList>
    </citation>
    <scope>INVOLVEMENT IN GAPOS</scope>
</reference>
<reference key="14">
    <citation type="journal article" date="2018" name="Cell Commun. Signal.">
        <title>TEM8 functions as a receptor for uPA and mediates uPA-stimulated EGFR phosphorylation.</title>
        <authorList>
            <person name="Zhang L.C."/>
            <person name="Shao Y."/>
            <person name="Gao L.H."/>
            <person name="Liu J."/>
            <person name="Xi Y.Y."/>
            <person name="Xu Y."/>
            <person name="Wu C."/>
            <person name="Chen W."/>
            <person name="Chen H.P."/>
            <person name="Wang Y.L."/>
            <person name="Duan H.F."/>
            <person name="Hu X.W."/>
        </authorList>
    </citation>
    <scope>FUNCTION</scope>
    <scope>PHOSPHORYLATION</scope>
    <scope>SUBCELLULAR LOCATION</scope>
</reference>
<reference key="15">
    <citation type="journal article" date="2021" name="Viruses">
        <title>N-Linked Glycosylation on Anthrax Toxin Receptor 1 Is Essential for Seneca Valley Virus Infection.</title>
        <authorList>
            <person name="Jayawardena N."/>
            <person name="Miles L.A."/>
            <person name="Burga L.N."/>
            <person name="Rudin C."/>
            <person name="Wolf M."/>
            <person name="Poirier J.T."/>
            <person name="Bostina M."/>
        </authorList>
    </citation>
    <scope>FUNCTION (MICROBIAL INFECTION)</scope>
    <scope>GLYCOSYLATION AT ASN-166 AND ASN-184</scope>
</reference>
<reference key="16">
    <citation type="journal article" date="2010" name="PLoS ONE">
        <title>The structure of tumor endothelial marker 8 (TEM8) extracellular domain and implications for its receptor function for recognizing anthrax toxin.</title>
        <authorList>
            <person name="Fu S."/>
            <person name="Tong X."/>
            <person name="Cai C."/>
            <person name="Zhao Y."/>
            <person name="Wu Y."/>
            <person name="Li Y."/>
            <person name="Xu J."/>
            <person name="Zhang X.C."/>
            <person name="Xu L."/>
            <person name="Chen W."/>
            <person name="Rao Z."/>
        </authorList>
    </citation>
    <scope>X-RAY CRYSTALLOGRAPHY (1.8 ANGSTROMS) OF 38-220 IN COMPLEX WITH MAGNESIUM</scope>
    <scope>SUBUNIT</scope>
    <scope>FUNCTION (MICROBIAL INFECTION)</scope>
    <scope>INTERACTION WITH ANTHRAX TOXIN PA (MICROBIAL INFECTION)</scope>
    <scope>DISULFIDE BOND</scope>
</reference>
<reference key="17">
    <citation type="journal article" date="2008" name="Nat. Med.">
        <title>Suppressed NFAT-dependent VEGFR1 expression and constitutive VEGFR2 signaling in infantile hemangioma.</title>
        <authorList>
            <person name="Jinnin M."/>
            <person name="Medici D."/>
            <person name="Park L."/>
            <person name="Limaye N."/>
            <person name="Liu Y."/>
            <person name="Boscolo E."/>
            <person name="Bischoff J."/>
            <person name="Vikkula M."/>
            <person name="Boye E."/>
            <person name="Olsen B.R."/>
        </authorList>
    </citation>
    <scope>VARIANT HCI SUSCEPTIBILITY THR-326</scope>
</reference>
<organism>
    <name type="scientific">Homo sapiens</name>
    <name type="common">Human</name>
    <dbReference type="NCBI Taxonomy" id="9606"/>
    <lineage>
        <taxon>Eukaryota</taxon>
        <taxon>Metazoa</taxon>
        <taxon>Chordata</taxon>
        <taxon>Craniata</taxon>
        <taxon>Vertebrata</taxon>
        <taxon>Euteleostomi</taxon>
        <taxon>Mammalia</taxon>
        <taxon>Eutheria</taxon>
        <taxon>Euarchontoglires</taxon>
        <taxon>Primates</taxon>
        <taxon>Haplorrhini</taxon>
        <taxon>Catarrhini</taxon>
        <taxon>Hominidae</taxon>
        <taxon>Homo</taxon>
    </lineage>
</organism>
<name>ANTR1_HUMAN</name>
<feature type="signal peptide" evidence="1">
    <location>
        <begin position="1"/>
        <end position="32"/>
    </location>
</feature>
<feature type="chain" id="PRO_0000002692" description="Anthrax toxin receptor 1">
    <location>
        <begin position="33"/>
        <end position="564"/>
    </location>
</feature>
<feature type="topological domain" description="Extracellular" evidence="1">
    <location>
        <begin position="33"/>
        <end position="321"/>
    </location>
</feature>
<feature type="transmembrane region" description="Helical" evidence="1">
    <location>
        <begin position="322"/>
        <end position="342"/>
    </location>
</feature>
<feature type="topological domain" description="Cytoplasmic" evidence="1">
    <location>
        <begin position="343"/>
        <end position="564"/>
    </location>
</feature>
<feature type="domain" description="VWFA" evidence="2">
    <location>
        <begin position="44"/>
        <end position="215"/>
    </location>
</feature>
<feature type="region of interest" description="Interaction with PA">
    <location>
        <begin position="154"/>
        <end position="160"/>
    </location>
</feature>
<feature type="region of interest" description="Disordered" evidence="3">
    <location>
        <begin position="356"/>
        <end position="375"/>
    </location>
</feature>
<feature type="region of interest" description="Disordered" evidence="3">
    <location>
        <begin position="402"/>
        <end position="444"/>
    </location>
</feature>
<feature type="region of interest" description="Disordered" evidence="3">
    <location>
        <begin position="493"/>
        <end position="564"/>
    </location>
</feature>
<feature type="compositionally biased region" description="Basic and acidic residues" evidence="3">
    <location>
        <begin position="402"/>
        <end position="422"/>
    </location>
</feature>
<feature type="compositionally biased region" description="Pro residues" evidence="3">
    <location>
        <begin position="505"/>
        <end position="564"/>
    </location>
</feature>
<feature type="binding site" evidence="11 22">
    <location>
        <position position="52"/>
    </location>
    <ligand>
        <name>a divalent metal cation</name>
        <dbReference type="ChEBI" id="CHEBI:60240"/>
    </ligand>
</feature>
<feature type="binding site" evidence="11 22">
    <location>
        <position position="54"/>
    </location>
    <ligand>
        <name>a divalent metal cation</name>
        <dbReference type="ChEBI" id="CHEBI:60240"/>
    </ligand>
</feature>
<feature type="binding site" evidence="11 22">
    <location>
        <position position="118"/>
    </location>
    <ligand>
        <name>a divalent metal cation</name>
        <dbReference type="ChEBI" id="CHEBI:60240"/>
    </ligand>
</feature>
<feature type="modified residue" description="Phosphoserine" evidence="23">
    <location>
        <position position="362"/>
    </location>
</feature>
<feature type="glycosylation site" description="N-linked (GlcNAc...) asparagine" evidence="14">
    <location>
        <position position="166"/>
    </location>
</feature>
<feature type="glycosylation site" description="N-linked (GlcNAc...) asparagine" evidence="10 14">
    <location>
        <position position="184"/>
    </location>
</feature>
<feature type="glycosylation site" description="N-linked (GlcNAc...) asparagine" evidence="1">
    <location>
        <position position="262"/>
    </location>
</feature>
<feature type="disulfide bond" evidence="11">
    <location>
        <begin position="39"/>
        <end position="220"/>
    </location>
</feature>
<feature type="splice variant" id="VSP_000446" description="In isoform 3." evidence="17">
    <original>NEKPFSVEDTYLLCPAPILKEVGMKAALQV</original>
    <variation>SKSLQSPWVSSTSGFKEGNSHPCLPARPHT</variation>
    <location>
        <begin position="268"/>
        <end position="297"/>
    </location>
</feature>
<feature type="splice variant" id="VSP_000447" description="In isoform 3." evidence="17">
    <location>
        <begin position="298"/>
        <end position="564"/>
    </location>
</feature>
<feature type="splice variant" id="VSP_047863" description="In isoform 6." evidence="19">
    <original>THCSDGSILAIALLILFLLLALALLWWFWPLCCTVIIKEVPPPP</original>
    <variation>FHPSPSSPGSTSQQGTSSLPPSSKAFCLEPKVPALGSLRNFRRC</variation>
    <location>
        <begin position="315"/>
        <end position="358"/>
    </location>
</feature>
<feature type="splice variant" id="VSP_000448" description="In isoform 4." evidence="17 18">
    <original>DGSILAIALLILFLL</original>
    <variation>LHKIASGPTTAACME</variation>
    <location>
        <begin position="319"/>
        <end position="333"/>
    </location>
</feature>
<feature type="splice variant" id="VSP_000449" description="In isoform 4." evidence="17 18">
    <location>
        <begin position="334"/>
        <end position="564"/>
    </location>
</feature>
<feature type="splice variant" id="VSP_047864" description="In isoform 6." evidence="19">
    <location>
        <begin position="359"/>
        <end position="564"/>
    </location>
</feature>
<feature type="splice variant" id="VSP_000444" description="In isoform 2." evidence="16">
    <original>EDDD</original>
    <variation>NKIK</variation>
    <location>
        <begin position="365"/>
        <end position="368"/>
    </location>
</feature>
<feature type="splice variant" id="VSP_000445" description="In isoform 2." evidence="16">
    <location>
        <begin position="369"/>
        <end position="564"/>
    </location>
</feature>
<feature type="splice variant" id="VSP_047865" description="In isoform 5." evidence="19">
    <location>
        <begin position="522"/>
        <end position="557"/>
    </location>
</feature>
<feature type="sequence variant" id="VAR_053015" description="In dbSNP:rs28365986." evidence="6">
    <original>R</original>
    <variation>K</variation>
    <location>
        <position position="7"/>
    </location>
</feature>
<feature type="sequence variant" id="VAR_063146" description="In HCI susceptibility; expression of FLT1 in hemangioma endothelial cells is markedly reduced compared to controls; low FLT1 expression in hemangioma cells is caused by reduced activity of a pathway involving ITGB1, ANTXR1, KDR and NFATC2IP; the mutation disrupts interaction of these molecules in a dominant-negative manner; dbSNP:rs119475040." evidence="9">
    <original>A</original>
    <variation>T</variation>
    <location>
        <position position="326"/>
    </location>
</feature>
<feature type="strand" evidence="24">
    <location>
        <begin position="40"/>
        <end position="50"/>
    </location>
</feature>
<feature type="helix" evidence="24">
    <location>
        <begin position="53"/>
        <end position="58"/>
    </location>
</feature>
<feature type="helix" evidence="24">
    <location>
        <begin position="59"/>
        <end position="72"/>
    </location>
</feature>
<feature type="strand" evidence="24">
    <location>
        <begin position="78"/>
        <end position="96"/>
    </location>
</feature>
<feature type="helix" evidence="24">
    <location>
        <begin position="99"/>
        <end position="110"/>
    </location>
</feature>
<feature type="helix" evidence="24">
    <location>
        <begin position="120"/>
        <end position="135"/>
    </location>
</feature>
<feature type="strand" evidence="24">
    <location>
        <begin position="141"/>
        <end position="149"/>
    </location>
</feature>
<feature type="helix" evidence="24">
    <location>
        <begin position="155"/>
        <end position="170"/>
    </location>
</feature>
<feature type="strand" evidence="24">
    <location>
        <begin position="173"/>
        <end position="179"/>
    </location>
</feature>
<feature type="helix" evidence="24">
    <location>
        <begin position="185"/>
        <end position="188"/>
    </location>
</feature>
<feature type="turn" evidence="24">
    <location>
        <begin position="189"/>
        <end position="191"/>
    </location>
</feature>
<feature type="strand" evidence="24">
    <location>
        <begin position="192"/>
        <end position="194"/>
    </location>
</feature>
<feature type="helix" evidence="24">
    <location>
        <begin position="195"/>
        <end position="197"/>
    </location>
</feature>
<feature type="strand" evidence="24">
    <location>
        <begin position="198"/>
        <end position="200"/>
    </location>
</feature>
<feature type="helix" evidence="24">
    <location>
        <begin position="201"/>
        <end position="217"/>
    </location>
</feature>
<protein>
    <recommendedName>
        <fullName evidence="20">Anthrax toxin receptor 1</fullName>
    </recommendedName>
    <alternativeName>
        <fullName evidence="15">Tumor endothelial marker 8</fullName>
    </alternativeName>
</protein>